<proteinExistence type="inferred from homology"/>
<reference key="1">
    <citation type="journal article" date="2004" name="Nat. Genet.">
        <title>Evidence in the Legionella pneumophila genome for exploitation of host cell functions and high genome plasticity.</title>
        <authorList>
            <person name="Cazalet C."/>
            <person name="Rusniok C."/>
            <person name="Brueggemann H."/>
            <person name="Zidane N."/>
            <person name="Magnier A."/>
            <person name="Ma L."/>
            <person name="Tichit M."/>
            <person name="Jarraud S."/>
            <person name="Bouchier C."/>
            <person name="Vandenesch F."/>
            <person name="Kunst F."/>
            <person name="Etienne J."/>
            <person name="Glaser P."/>
            <person name="Buchrieser C."/>
        </authorList>
    </citation>
    <scope>NUCLEOTIDE SEQUENCE [LARGE SCALE GENOMIC DNA]</scope>
    <source>
        <strain>Lens</strain>
    </source>
</reference>
<comment type="function">
    <text evidence="1">Allows the formation of correctly charged Asn-tRNA(Asn) or Gln-tRNA(Gln) through the transamidation of misacylated Asp-tRNA(Asn) or Glu-tRNA(Gln) in organisms which lack either or both of asparaginyl-tRNA or glutaminyl-tRNA synthetases. The reaction takes place in the presence of glutamine and ATP through an activated phospho-Asp-tRNA(Asn) or phospho-Glu-tRNA(Gln).</text>
</comment>
<comment type="catalytic activity">
    <reaction evidence="1">
        <text>L-glutamyl-tRNA(Gln) + L-glutamine + ATP + H2O = L-glutaminyl-tRNA(Gln) + L-glutamate + ADP + phosphate + H(+)</text>
        <dbReference type="Rhea" id="RHEA:17521"/>
        <dbReference type="Rhea" id="RHEA-COMP:9681"/>
        <dbReference type="Rhea" id="RHEA-COMP:9684"/>
        <dbReference type="ChEBI" id="CHEBI:15377"/>
        <dbReference type="ChEBI" id="CHEBI:15378"/>
        <dbReference type="ChEBI" id="CHEBI:29985"/>
        <dbReference type="ChEBI" id="CHEBI:30616"/>
        <dbReference type="ChEBI" id="CHEBI:43474"/>
        <dbReference type="ChEBI" id="CHEBI:58359"/>
        <dbReference type="ChEBI" id="CHEBI:78520"/>
        <dbReference type="ChEBI" id="CHEBI:78521"/>
        <dbReference type="ChEBI" id="CHEBI:456216"/>
    </reaction>
</comment>
<comment type="catalytic activity">
    <reaction evidence="1">
        <text>L-aspartyl-tRNA(Asn) + L-glutamine + ATP + H2O = L-asparaginyl-tRNA(Asn) + L-glutamate + ADP + phosphate + 2 H(+)</text>
        <dbReference type="Rhea" id="RHEA:14513"/>
        <dbReference type="Rhea" id="RHEA-COMP:9674"/>
        <dbReference type="Rhea" id="RHEA-COMP:9677"/>
        <dbReference type="ChEBI" id="CHEBI:15377"/>
        <dbReference type="ChEBI" id="CHEBI:15378"/>
        <dbReference type="ChEBI" id="CHEBI:29985"/>
        <dbReference type="ChEBI" id="CHEBI:30616"/>
        <dbReference type="ChEBI" id="CHEBI:43474"/>
        <dbReference type="ChEBI" id="CHEBI:58359"/>
        <dbReference type="ChEBI" id="CHEBI:78515"/>
        <dbReference type="ChEBI" id="CHEBI:78516"/>
        <dbReference type="ChEBI" id="CHEBI:456216"/>
    </reaction>
</comment>
<comment type="subunit">
    <text evidence="1">Heterotrimer of A, B and C subunits.</text>
</comment>
<comment type="similarity">
    <text evidence="1">Belongs to the GatB/GatE family. GatB subfamily.</text>
</comment>
<sequence>MEWDTVIGLEVHAQLKTKSKLFSGASTAFGATPNSQTSFIDAGLPGVLPVLNEQAIIMAIQFGLAIHGTINDLSVFERKNYFYPDLPKGYQISQYQKPIVTNGYLNIQLGNNLEKTVHIARAHLEEDAGKSLHDAHTDYTGIDLNRAGTPLLEIVTTPCLYSAEEAINYLKTLHQLVRFLGICDGNMQEGSFRCDVNLSIKPKGSSVLGTRTELKNLNSFRFIEKAIAFEQARHQDILESGLSVIQETRLYNPDNNTTQAMRGKENENDYRYFPDPDLLPIHIDKEQIEEIKNNLPDLPEAISKELKNTPSLNDEDINFILSSPDTYQYYKKIKSLCSAADKTIINWLKGQYAAFLNEHTLTFETPPISAKTMAAFLSKIHEKKISSSIAKNIFSMLCAGEEDIDAIIEREGYQQQNDNSALEEIVEQIIKQYPEQVTEYKAGKEKLLAFFIGQAMKQTKGKANPEQINLLLKKHLG</sequence>
<accession>Q5WVV9</accession>
<keyword id="KW-0067">ATP-binding</keyword>
<keyword id="KW-0436">Ligase</keyword>
<keyword id="KW-0547">Nucleotide-binding</keyword>
<keyword id="KW-0648">Protein biosynthesis</keyword>
<name>GATB_LEGPL</name>
<gene>
    <name evidence="1" type="primary">gatB</name>
    <name type="ordered locus">lpl1701</name>
</gene>
<dbReference type="EC" id="6.3.5.-" evidence="1"/>
<dbReference type="EMBL" id="CR628337">
    <property type="protein sequence ID" value="CAH15941.1"/>
    <property type="molecule type" value="Genomic_DNA"/>
</dbReference>
<dbReference type="RefSeq" id="WP_011215717.1">
    <property type="nucleotide sequence ID" value="NC_006369.1"/>
</dbReference>
<dbReference type="SMR" id="Q5WVV9"/>
<dbReference type="KEGG" id="lpf:lpl1701"/>
<dbReference type="LegioList" id="lpl1701"/>
<dbReference type="HOGENOM" id="CLU_019240_0_0_6"/>
<dbReference type="Proteomes" id="UP000002517">
    <property type="component" value="Chromosome"/>
</dbReference>
<dbReference type="GO" id="GO:0050566">
    <property type="term" value="F:asparaginyl-tRNA synthase (glutamine-hydrolyzing) activity"/>
    <property type="evidence" value="ECO:0007669"/>
    <property type="project" value="RHEA"/>
</dbReference>
<dbReference type="GO" id="GO:0005524">
    <property type="term" value="F:ATP binding"/>
    <property type="evidence" value="ECO:0007669"/>
    <property type="project" value="UniProtKB-KW"/>
</dbReference>
<dbReference type="GO" id="GO:0050567">
    <property type="term" value="F:glutaminyl-tRNA synthase (glutamine-hydrolyzing) activity"/>
    <property type="evidence" value="ECO:0007669"/>
    <property type="project" value="UniProtKB-UniRule"/>
</dbReference>
<dbReference type="GO" id="GO:0070681">
    <property type="term" value="P:glutaminyl-tRNAGln biosynthesis via transamidation"/>
    <property type="evidence" value="ECO:0007669"/>
    <property type="project" value="TreeGrafter"/>
</dbReference>
<dbReference type="GO" id="GO:0006412">
    <property type="term" value="P:translation"/>
    <property type="evidence" value="ECO:0007669"/>
    <property type="project" value="UniProtKB-UniRule"/>
</dbReference>
<dbReference type="FunFam" id="1.10.10.410:FF:000001">
    <property type="entry name" value="Aspartyl/glutamyl-tRNA(Asn/Gln) amidotransferase subunit B"/>
    <property type="match status" value="1"/>
</dbReference>
<dbReference type="Gene3D" id="1.10.10.410">
    <property type="match status" value="1"/>
</dbReference>
<dbReference type="HAMAP" id="MF_00121">
    <property type="entry name" value="GatB"/>
    <property type="match status" value="1"/>
</dbReference>
<dbReference type="InterPro" id="IPR017959">
    <property type="entry name" value="Asn/Gln-tRNA_amidoTrfase_suB/E"/>
</dbReference>
<dbReference type="InterPro" id="IPR006075">
    <property type="entry name" value="Asn/Gln-tRNA_Trfase_suB/E_cat"/>
</dbReference>
<dbReference type="InterPro" id="IPR018027">
    <property type="entry name" value="Asn/Gln_amidotransferase"/>
</dbReference>
<dbReference type="InterPro" id="IPR003789">
    <property type="entry name" value="Asn/Gln_tRNA_amidoTrase-B-like"/>
</dbReference>
<dbReference type="InterPro" id="IPR004413">
    <property type="entry name" value="GatB"/>
</dbReference>
<dbReference type="InterPro" id="IPR023168">
    <property type="entry name" value="GatB_Yqey_C_2"/>
</dbReference>
<dbReference type="InterPro" id="IPR017958">
    <property type="entry name" value="Gln-tRNA_amidoTrfase_suB_CS"/>
</dbReference>
<dbReference type="InterPro" id="IPR014746">
    <property type="entry name" value="Gln_synth/guanido_kin_cat_dom"/>
</dbReference>
<dbReference type="NCBIfam" id="TIGR00133">
    <property type="entry name" value="gatB"/>
    <property type="match status" value="1"/>
</dbReference>
<dbReference type="NCBIfam" id="NF004012">
    <property type="entry name" value="PRK05477.1-2"/>
    <property type="match status" value="1"/>
</dbReference>
<dbReference type="NCBIfam" id="NF004014">
    <property type="entry name" value="PRK05477.1-4"/>
    <property type="match status" value="1"/>
</dbReference>
<dbReference type="PANTHER" id="PTHR11659">
    <property type="entry name" value="GLUTAMYL-TRNA GLN AMIDOTRANSFERASE SUBUNIT B MITOCHONDRIAL AND PROKARYOTIC PET112-RELATED"/>
    <property type="match status" value="1"/>
</dbReference>
<dbReference type="PANTHER" id="PTHR11659:SF0">
    <property type="entry name" value="GLUTAMYL-TRNA(GLN) AMIDOTRANSFERASE SUBUNIT B, MITOCHONDRIAL"/>
    <property type="match status" value="1"/>
</dbReference>
<dbReference type="Pfam" id="PF02934">
    <property type="entry name" value="GatB_N"/>
    <property type="match status" value="1"/>
</dbReference>
<dbReference type="Pfam" id="PF02637">
    <property type="entry name" value="GatB_Yqey"/>
    <property type="match status" value="1"/>
</dbReference>
<dbReference type="SMART" id="SM00845">
    <property type="entry name" value="GatB_Yqey"/>
    <property type="match status" value="1"/>
</dbReference>
<dbReference type="SUPFAM" id="SSF89095">
    <property type="entry name" value="GatB/YqeY motif"/>
    <property type="match status" value="1"/>
</dbReference>
<dbReference type="SUPFAM" id="SSF55931">
    <property type="entry name" value="Glutamine synthetase/guanido kinase"/>
    <property type="match status" value="1"/>
</dbReference>
<dbReference type="PROSITE" id="PS01234">
    <property type="entry name" value="GATB"/>
    <property type="match status" value="1"/>
</dbReference>
<organism>
    <name type="scientific">Legionella pneumophila (strain Lens)</name>
    <dbReference type="NCBI Taxonomy" id="297245"/>
    <lineage>
        <taxon>Bacteria</taxon>
        <taxon>Pseudomonadati</taxon>
        <taxon>Pseudomonadota</taxon>
        <taxon>Gammaproteobacteria</taxon>
        <taxon>Legionellales</taxon>
        <taxon>Legionellaceae</taxon>
        <taxon>Legionella</taxon>
    </lineage>
</organism>
<protein>
    <recommendedName>
        <fullName evidence="1">Aspartyl/glutamyl-tRNA(Asn/Gln) amidotransferase subunit B</fullName>
        <shortName evidence="1">Asp/Glu-ADT subunit B</shortName>
        <ecNumber evidence="1">6.3.5.-</ecNumber>
    </recommendedName>
</protein>
<feature type="chain" id="PRO_0000241233" description="Aspartyl/glutamyl-tRNA(Asn/Gln) amidotransferase subunit B">
    <location>
        <begin position="1"/>
        <end position="477"/>
    </location>
</feature>
<evidence type="ECO:0000255" key="1">
    <source>
        <dbReference type="HAMAP-Rule" id="MF_00121"/>
    </source>
</evidence>